<evidence type="ECO:0000255" key="1">
    <source>
        <dbReference type="PROSITE-ProRule" id="PRU00434"/>
    </source>
</evidence>
<evidence type="ECO:0000269" key="2">
    <source>
    </source>
</evidence>
<evidence type="ECO:0000269" key="3">
    <source>
    </source>
</evidence>
<evidence type="ECO:0000269" key="4">
    <source>
    </source>
</evidence>
<evidence type="ECO:0000303" key="5">
    <source>
    </source>
</evidence>
<evidence type="ECO:0000303" key="6">
    <source>
    </source>
</evidence>
<evidence type="ECO:0000305" key="7"/>
<evidence type="ECO:0000305" key="8">
    <source>
    </source>
</evidence>
<evidence type="ECO:0000305" key="9">
    <source>
    </source>
</evidence>
<evidence type="ECO:0000312" key="10">
    <source>
        <dbReference type="EMBL" id="ABD31767.1"/>
    </source>
</evidence>
<comment type="function">
    <text evidence="2 3">Part of the ABC transporter complex CntABCDF (Opp1) involved in the uptake of metal in complex with the metallophore staphylopine (StP). Involved in the import of divalent metals ions such as nickel, cobalt and zinc. Probably responsible for energy coupling to the transport system (PubMed:23279021, PubMed:29581261). Plays a major role in nickel/cobalt import in zinc-depleted conditions. Contributes to virulence. Required for full urease activity in vitro (PubMed:23279021).</text>
</comment>
<comment type="activity regulation">
    <text evidence="2">Nickel/cobalt import is reduced in the presence of zinc.</text>
</comment>
<comment type="subunit">
    <text evidence="8 9">The complex is composed of two ATP-binding proteins (CntD and CntF), two transmembrane proteins (CntB and CntC) and a solute-binding protein (CntA).</text>
</comment>
<comment type="subcellular location">
    <subcellularLocation>
        <location evidence="7">Cell membrane</location>
        <topology evidence="7">Peripheral membrane protein</topology>
    </subcellularLocation>
</comment>
<comment type="induction">
    <text evidence="2">Repressed by zinc.</text>
</comment>
<comment type="disruption phenotype">
    <text evidence="2 4">Deletion of the cntABCDF genes decreases nickel and cobalt intracellular levels and decreases virulence (PubMed:23279021). Insertion mutant shows attenuated growth in several infection models (PubMed:9791183).</text>
</comment>
<comment type="similarity">
    <text evidence="7">Belongs to the ABC transporter superfamily.</text>
</comment>
<comment type="sequence caution" evidence="7">
    <conflict type="erroneous initiation">
        <sequence resource="EMBL-CDS" id="AAC69841"/>
    </conflict>
    <text>Extended N-terminus.</text>
</comment>
<sequence>MIKIKDVEKSYQSAHVFKRRRTPIVKGVSFECPIGATIAIIGESGSGKSTLSRMILGIEKPDKGCVTLNDQPMHKKKVRRHQIGAVFQDYTSSLHPFQTVREILFEVMCQCDGQPKEVMEVQAITLLEEVGLSKAYMDKYPNMLSGGEAQRVAIARAICINPKYILFDEAISSLDMSIQTQILDLLIHLRETRQLSYIFITHDIQAATYLCDQLIIFKNGKIEEQIPTSALHKSDNAYTRELIEKQLSF</sequence>
<protein>
    <recommendedName>
        <fullName evidence="7">Metal-staphylopine import system ATP-binding protein CntF</fullName>
        <ecNumber evidence="8">7.2.2.-</ecNumber>
    </recommendedName>
</protein>
<dbReference type="EC" id="7.2.2.-" evidence="8"/>
<dbReference type="EMBL" id="AF076683">
    <property type="protein sequence ID" value="AAC69841.1"/>
    <property type="status" value="ALT_INIT"/>
    <property type="molecule type" value="Genomic_DNA"/>
</dbReference>
<dbReference type="EMBL" id="CP000253">
    <property type="protein sequence ID" value="ABD31767.1"/>
    <property type="molecule type" value="Genomic_DNA"/>
</dbReference>
<dbReference type="RefSeq" id="WP_000590517.1">
    <property type="nucleotide sequence ID" value="NZ_LS483365.1"/>
</dbReference>
<dbReference type="RefSeq" id="YP_501222.1">
    <property type="nucleotide sequence ID" value="NC_007795.1"/>
</dbReference>
<dbReference type="SMR" id="Q2FVF1"/>
<dbReference type="STRING" id="93061.SAOUHSC_02763"/>
<dbReference type="TCDB" id="3.A.1.5.43">
    <property type="family name" value="the atp-binding cassette (abc) superfamily"/>
</dbReference>
<dbReference type="PaxDb" id="1280-SAXN108_2717"/>
<dbReference type="GeneID" id="3921635"/>
<dbReference type="KEGG" id="sao:SAOUHSC_02763"/>
<dbReference type="PATRIC" id="fig|93061.5.peg.2498"/>
<dbReference type="eggNOG" id="COG1124">
    <property type="taxonomic scope" value="Bacteria"/>
</dbReference>
<dbReference type="HOGENOM" id="CLU_000604_1_23_9"/>
<dbReference type="OrthoDB" id="9802264at2"/>
<dbReference type="Proteomes" id="UP000008816">
    <property type="component" value="Chromosome"/>
</dbReference>
<dbReference type="GO" id="GO:0005886">
    <property type="term" value="C:plasma membrane"/>
    <property type="evidence" value="ECO:0007669"/>
    <property type="project" value="UniProtKB-SubCell"/>
</dbReference>
<dbReference type="GO" id="GO:0005524">
    <property type="term" value="F:ATP binding"/>
    <property type="evidence" value="ECO:0007669"/>
    <property type="project" value="UniProtKB-KW"/>
</dbReference>
<dbReference type="GO" id="GO:0016887">
    <property type="term" value="F:ATP hydrolysis activity"/>
    <property type="evidence" value="ECO:0007669"/>
    <property type="project" value="InterPro"/>
</dbReference>
<dbReference type="GO" id="GO:0006824">
    <property type="term" value="P:cobalt ion transport"/>
    <property type="evidence" value="ECO:0007669"/>
    <property type="project" value="UniProtKB-KW"/>
</dbReference>
<dbReference type="GO" id="GO:0015675">
    <property type="term" value="P:nickel cation transport"/>
    <property type="evidence" value="ECO:0007669"/>
    <property type="project" value="UniProtKB-KW"/>
</dbReference>
<dbReference type="GO" id="GO:0006829">
    <property type="term" value="P:zinc ion transport"/>
    <property type="evidence" value="ECO:0007669"/>
    <property type="project" value="UniProtKB-KW"/>
</dbReference>
<dbReference type="CDD" id="cd03257">
    <property type="entry name" value="ABC_NikE_OppD_transporters"/>
    <property type="match status" value="1"/>
</dbReference>
<dbReference type="Gene3D" id="3.40.50.300">
    <property type="entry name" value="P-loop containing nucleotide triphosphate hydrolases"/>
    <property type="match status" value="1"/>
</dbReference>
<dbReference type="InterPro" id="IPR003593">
    <property type="entry name" value="AAA+_ATPase"/>
</dbReference>
<dbReference type="InterPro" id="IPR050319">
    <property type="entry name" value="ABC_transp_ATP-bind"/>
</dbReference>
<dbReference type="InterPro" id="IPR003439">
    <property type="entry name" value="ABC_transporter-like_ATP-bd"/>
</dbReference>
<dbReference type="InterPro" id="IPR017871">
    <property type="entry name" value="ABC_transporter-like_CS"/>
</dbReference>
<dbReference type="InterPro" id="IPR027417">
    <property type="entry name" value="P-loop_NTPase"/>
</dbReference>
<dbReference type="PANTHER" id="PTHR43776:SF7">
    <property type="entry name" value="D,D-DIPEPTIDE TRANSPORT ATP-BINDING PROTEIN DDPF-RELATED"/>
    <property type="match status" value="1"/>
</dbReference>
<dbReference type="PANTHER" id="PTHR43776">
    <property type="entry name" value="TRANSPORT ATP-BINDING PROTEIN"/>
    <property type="match status" value="1"/>
</dbReference>
<dbReference type="Pfam" id="PF00005">
    <property type="entry name" value="ABC_tran"/>
    <property type="match status" value="1"/>
</dbReference>
<dbReference type="SMART" id="SM00382">
    <property type="entry name" value="AAA"/>
    <property type="match status" value="1"/>
</dbReference>
<dbReference type="SUPFAM" id="SSF52540">
    <property type="entry name" value="P-loop containing nucleoside triphosphate hydrolases"/>
    <property type="match status" value="1"/>
</dbReference>
<dbReference type="PROSITE" id="PS00211">
    <property type="entry name" value="ABC_TRANSPORTER_1"/>
    <property type="match status" value="1"/>
</dbReference>
<dbReference type="PROSITE" id="PS50893">
    <property type="entry name" value="ABC_TRANSPORTER_2"/>
    <property type="match status" value="1"/>
</dbReference>
<name>CNTF_STAA8</name>
<feature type="chain" id="PRO_0000447277" description="Metal-staphylopine import system ATP-binding protein CntF">
    <location>
        <begin position="1"/>
        <end position="249"/>
    </location>
</feature>
<feature type="domain" description="ABC transporter" evidence="1">
    <location>
        <begin position="2"/>
        <end position="244"/>
    </location>
</feature>
<feature type="binding site" evidence="1">
    <location>
        <begin position="42"/>
        <end position="49"/>
    </location>
    <ligand>
        <name>ATP</name>
        <dbReference type="ChEBI" id="CHEBI:30616"/>
    </ligand>
</feature>
<feature type="sequence conflict" description="In Ref. 1; AAC69841." evidence="7" ref="1">
    <original>E</original>
    <variation>D</variation>
    <location>
        <position position="117"/>
    </location>
</feature>
<gene>
    <name evidence="5" type="primary">cntF</name>
    <name evidence="6" type="synonym">opp-1F</name>
    <name evidence="5" type="synonym">opp1F</name>
    <name evidence="10" type="ordered locus">SAOUHSC_02763</name>
</gene>
<keyword id="KW-0067">ATP-binding</keyword>
<keyword id="KW-1003">Cell membrane</keyword>
<keyword id="KW-0170">Cobalt</keyword>
<keyword id="KW-0171">Cobalt transport</keyword>
<keyword id="KW-0406">Ion transport</keyword>
<keyword id="KW-0472">Membrane</keyword>
<keyword id="KW-0533">Nickel</keyword>
<keyword id="KW-0921">Nickel transport</keyword>
<keyword id="KW-0547">Nucleotide-binding</keyword>
<keyword id="KW-1185">Reference proteome</keyword>
<keyword id="KW-1278">Translocase</keyword>
<keyword id="KW-0813">Transport</keyword>
<keyword id="KW-0862">Zinc</keyword>
<keyword id="KW-0864">Zinc transport</keyword>
<proteinExistence type="evidence at protein level"/>
<reference key="1">
    <citation type="journal article" date="1998" name="Mol. Microbiol.">
        <title>Staphylococcus aureus genetic loci impacting growth and survival in multiple infection environments.</title>
        <authorList>
            <person name="Coulter S.N."/>
            <person name="Schwan W.R."/>
            <person name="Ng E.Y.W."/>
            <person name="Langhorne M.H."/>
            <person name="Ritchie H.D."/>
            <person name="Westbrock-Wadman S."/>
            <person name="Hufnagle W.O."/>
            <person name="Folger K.R."/>
            <person name="Bayer A.S."/>
            <person name="Stover C.K."/>
        </authorList>
    </citation>
    <scope>NUCLEOTIDE SEQUENCE [GENOMIC DNA]</scope>
    <scope>DISRUPTION PHENOTYPE</scope>
    <source>
        <strain>NCTC 8325 / PS 47</strain>
    </source>
</reference>
<reference key="2">
    <citation type="book" date="2006" name="Gram positive pathogens, 2nd edition">
        <title>The Staphylococcus aureus NCTC 8325 genome.</title>
        <editorList>
            <person name="Fischetti V."/>
            <person name="Novick R."/>
            <person name="Ferretti J."/>
            <person name="Portnoy D."/>
            <person name="Rood J."/>
        </editorList>
        <authorList>
            <person name="Gillaspy A.F."/>
            <person name="Worrell V."/>
            <person name="Orvis J."/>
            <person name="Roe B.A."/>
            <person name="Dyer D.W."/>
            <person name="Iandolo J.J."/>
        </authorList>
    </citation>
    <scope>NUCLEOTIDE SEQUENCE [LARGE SCALE GENOMIC DNA]</scope>
    <source>
        <strain>NCTC 8325 / PS 47</strain>
    </source>
</reference>
<reference key="3">
    <citation type="journal article" date="2013" name="Mol. Microbiol.">
        <title>The Staphylococcus aureus Opp1 ABC transporter imports nickel and cobalt in zinc-depleted conditions and contributes to virulence.</title>
        <authorList>
            <person name="Remy L."/>
            <person name="Carriere M."/>
            <person name="Derre-Bobillot A."/>
            <person name="Martini C."/>
            <person name="Sanguinetti M."/>
            <person name="Borezee-Durant E."/>
        </authorList>
    </citation>
    <scope>FUNCTION</scope>
    <scope>ACTIVITY REGULATION</scope>
    <scope>SUBUNIT</scope>
    <scope>INDUCTION</scope>
    <scope>DISRUPTION PHENOTYPE</scope>
    <source>
        <strain>RN6390</strain>
    </source>
</reference>
<reference key="4">
    <citation type="journal article" date="2018" name="Proc. Natl. Acad. Sci. U.S.A.">
        <title>Mechanistic insights into staphylopine-mediated metal acquisition.</title>
        <authorList>
            <person name="Song L."/>
            <person name="Zhang Y."/>
            <person name="Chen W."/>
            <person name="Gu T."/>
            <person name="Zhang S.Y."/>
            <person name="Ji Q."/>
        </authorList>
    </citation>
    <scope>FUNCTION</scope>
    <scope>SUBUNIT</scope>
</reference>
<accession>Q2FVF1</accession>
<accession>Q9ZGN8</accession>
<organism>
    <name type="scientific">Staphylococcus aureus (strain NCTC 8325 / PS 47)</name>
    <dbReference type="NCBI Taxonomy" id="93061"/>
    <lineage>
        <taxon>Bacteria</taxon>
        <taxon>Bacillati</taxon>
        <taxon>Bacillota</taxon>
        <taxon>Bacilli</taxon>
        <taxon>Bacillales</taxon>
        <taxon>Staphylococcaceae</taxon>
        <taxon>Staphylococcus</taxon>
    </lineage>
</organism>